<evidence type="ECO:0000255" key="1">
    <source>
        <dbReference type="HAMAP-Rule" id="MF_00098"/>
    </source>
</evidence>
<proteinExistence type="inferred from homology"/>
<organism>
    <name type="scientific">Shigella boydii serotype 18 (strain CDC 3083-94 / BS512)</name>
    <dbReference type="NCBI Taxonomy" id="344609"/>
    <lineage>
        <taxon>Bacteria</taxon>
        <taxon>Pseudomonadati</taxon>
        <taxon>Pseudomonadota</taxon>
        <taxon>Gammaproteobacteria</taxon>
        <taxon>Enterobacterales</taxon>
        <taxon>Enterobacteriaceae</taxon>
        <taxon>Shigella</taxon>
    </lineage>
</organism>
<gene>
    <name evidence="1" type="primary">metG</name>
    <name type="ordered locus">SbBS512_E0856</name>
</gene>
<protein>
    <recommendedName>
        <fullName evidence="1">Methionine--tRNA ligase</fullName>
        <ecNumber evidence="1">6.1.1.10</ecNumber>
    </recommendedName>
    <alternativeName>
        <fullName evidence="1">Methionyl-tRNA synthetase</fullName>
        <shortName evidence="1">MetRS</shortName>
    </alternativeName>
</protein>
<feature type="chain" id="PRO_1000093734" description="Methionine--tRNA ligase">
    <location>
        <begin position="1"/>
        <end position="677"/>
    </location>
</feature>
<feature type="domain" description="tRNA-binding" evidence="1">
    <location>
        <begin position="575"/>
        <end position="677"/>
    </location>
</feature>
<feature type="short sequence motif" description="'HIGH' region">
    <location>
        <begin position="15"/>
        <end position="25"/>
    </location>
</feature>
<feature type="short sequence motif" description="'KMSKS' region">
    <location>
        <begin position="333"/>
        <end position="337"/>
    </location>
</feature>
<feature type="binding site" evidence="1">
    <location>
        <position position="146"/>
    </location>
    <ligand>
        <name>Zn(2+)</name>
        <dbReference type="ChEBI" id="CHEBI:29105"/>
    </ligand>
</feature>
<feature type="binding site" evidence="1">
    <location>
        <position position="149"/>
    </location>
    <ligand>
        <name>Zn(2+)</name>
        <dbReference type="ChEBI" id="CHEBI:29105"/>
    </ligand>
</feature>
<feature type="binding site" evidence="1">
    <location>
        <position position="159"/>
    </location>
    <ligand>
        <name>Zn(2+)</name>
        <dbReference type="ChEBI" id="CHEBI:29105"/>
    </ligand>
</feature>
<feature type="binding site" evidence="1">
    <location>
        <position position="162"/>
    </location>
    <ligand>
        <name>Zn(2+)</name>
        <dbReference type="ChEBI" id="CHEBI:29105"/>
    </ligand>
</feature>
<feature type="binding site" evidence="1">
    <location>
        <position position="336"/>
    </location>
    <ligand>
        <name>ATP</name>
        <dbReference type="ChEBI" id="CHEBI:30616"/>
    </ligand>
</feature>
<sequence length="677" mass="76327">MTQVAKKILVTCALPYANGSIHLGHMLEHIQADVWVRYQRMRGHEVNFICADDAHGTPIMLKAQQLGITPEQMIGEMSQEHQTDFAGFNISYDNYHSTHSEENRQLSELIYSRLKENGFIKNRTISQLYDPEKGMFLPDRFVKGTCPKCKSPDQYGDNCEVCGATYSPTELIEPKSVVSGATPVMRDSEHFFFDLPSFSEMLQAWTRSGALQEQVANKMQEWFESGLQQWDISRDAPYFGFEIPNAPGKYFYVWLDAPIGYMGSFKNLCDKRGDSVSFDEYWKKDSTAELYHFIGKDIVYFHSLFWPAMLEGSNFRKPTNLFVHGYVTVNGAKMSKSRGTFIKASTWLNHFDADSLRYYYTAKLSSRIDDIDLNLEDFVQRVNADIVNKVVNLASRNAGFINKRFDGVLASELADPQLYRTFTDAAEVIGEAWESREFGKAVREIMALADLANRYVDEQAPWVVAKQEGRDADLQAICSMGINLFRVLMTYLKPVLPKLTERAEAFLNTELTWDGIQQPLLDHKVNPFKALYNRIDMKQVEALVEASKEEVKAAAAPVTGPLADDPIQETITFDDFAKVDLRVALIENAEFVEGSDKLLRLTLDLGGEKRNVFSGIRSAYPDPQALIGRHTIMVANLAPRKMRFGISEGMVMAAGPGGKDIFLLSPDAGAKPGHQVK</sequence>
<keyword id="KW-0030">Aminoacyl-tRNA synthetase</keyword>
<keyword id="KW-0067">ATP-binding</keyword>
<keyword id="KW-0963">Cytoplasm</keyword>
<keyword id="KW-0436">Ligase</keyword>
<keyword id="KW-0479">Metal-binding</keyword>
<keyword id="KW-0547">Nucleotide-binding</keyword>
<keyword id="KW-0648">Protein biosynthesis</keyword>
<keyword id="KW-1185">Reference proteome</keyword>
<keyword id="KW-0694">RNA-binding</keyword>
<keyword id="KW-0820">tRNA-binding</keyword>
<keyword id="KW-0862">Zinc</keyword>
<comment type="function">
    <text evidence="1">Is required not only for elongation of protein synthesis but also for the initiation of all mRNA translation through initiator tRNA(fMet) aminoacylation.</text>
</comment>
<comment type="catalytic activity">
    <reaction evidence="1">
        <text>tRNA(Met) + L-methionine + ATP = L-methionyl-tRNA(Met) + AMP + diphosphate</text>
        <dbReference type="Rhea" id="RHEA:13481"/>
        <dbReference type="Rhea" id="RHEA-COMP:9667"/>
        <dbReference type="Rhea" id="RHEA-COMP:9698"/>
        <dbReference type="ChEBI" id="CHEBI:30616"/>
        <dbReference type="ChEBI" id="CHEBI:33019"/>
        <dbReference type="ChEBI" id="CHEBI:57844"/>
        <dbReference type="ChEBI" id="CHEBI:78442"/>
        <dbReference type="ChEBI" id="CHEBI:78530"/>
        <dbReference type="ChEBI" id="CHEBI:456215"/>
        <dbReference type="EC" id="6.1.1.10"/>
    </reaction>
</comment>
<comment type="cofactor">
    <cofactor evidence="1">
        <name>Zn(2+)</name>
        <dbReference type="ChEBI" id="CHEBI:29105"/>
    </cofactor>
    <text evidence="1">Binds 1 zinc ion per subunit.</text>
</comment>
<comment type="subunit">
    <text evidence="1">Homodimer.</text>
</comment>
<comment type="subcellular location">
    <subcellularLocation>
        <location evidence="1">Cytoplasm</location>
    </subcellularLocation>
</comment>
<comment type="similarity">
    <text evidence="1">Belongs to the class-I aminoacyl-tRNA synthetase family. MetG type 1 subfamily.</text>
</comment>
<reference key="1">
    <citation type="submission" date="2008-05" db="EMBL/GenBank/DDBJ databases">
        <title>Complete sequence of Shigella boydii serotype 18 strain BS512.</title>
        <authorList>
            <person name="Rasko D.A."/>
            <person name="Rosovitz M."/>
            <person name="Maurelli A.T."/>
            <person name="Myers G."/>
            <person name="Seshadri R."/>
            <person name="Cer R."/>
            <person name="Jiang L."/>
            <person name="Ravel J."/>
            <person name="Sebastian Y."/>
        </authorList>
    </citation>
    <scope>NUCLEOTIDE SEQUENCE [LARGE SCALE GENOMIC DNA]</scope>
    <source>
        <strain>CDC 3083-94 / BS512</strain>
    </source>
</reference>
<name>SYM_SHIB3</name>
<accession>B2TVX7</accession>
<dbReference type="EC" id="6.1.1.10" evidence="1"/>
<dbReference type="EMBL" id="CP001063">
    <property type="protein sequence ID" value="ACD08787.1"/>
    <property type="molecule type" value="Genomic_DNA"/>
</dbReference>
<dbReference type="RefSeq" id="WP_012421487.1">
    <property type="nucleotide sequence ID" value="NC_010658.1"/>
</dbReference>
<dbReference type="SMR" id="B2TVX7"/>
<dbReference type="STRING" id="344609.SbBS512_E0856"/>
<dbReference type="KEGG" id="sbc:SbBS512_E0856"/>
<dbReference type="HOGENOM" id="CLU_009710_7_0_6"/>
<dbReference type="Proteomes" id="UP000001030">
    <property type="component" value="Chromosome"/>
</dbReference>
<dbReference type="GO" id="GO:0005829">
    <property type="term" value="C:cytosol"/>
    <property type="evidence" value="ECO:0007669"/>
    <property type="project" value="TreeGrafter"/>
</dbReference>
<dbReference type="GO" id="GO:0005524">
    <property type="term" value="F:ATP binding"/>
    <property type="evidence" value="ECO:0007669"/>
    <property type="project" value="UniProtKB-UniRule"/>
</dbReference>
<dbReference type="GO" id="GO:0046872">
    <property type="term" value="F:metal ion binding"/>
    <property type="evidence" value="ECO:0007669"/>
    <property type="project" value="UniProtKB-KW"/>
</dbReference>
<dbReference type="GO" id="GO:0004825">
    <property type="term" value="F:methionine-tRNA ligase activity"/>
    <property type="evidence" value="ECO:0007669"/>
    <property type="project" value="UniProtKB-UniRule"/>
</dbReference>
<dbReference type="GO" id="GO:0000049">
    <property type="term" value="F:tRNA binding"/>
    <property type="evidence" value="ECO:0007669"/>
    <property type="project" value="UniProtKB-KW"/>
</dbReference>
<dbReference type="GO" id="GO:0006431">
    <property type="term" value="P:methionyl-tRNA aminoacylation"/>
    <property type="evidence" value="ECO:0007669"/>
    <property type="project" value="UniProtKB-UniRule"/>
</dbReference>
<dbReference type="CDD" id="cd07957">
    <property type="entry name" value="Anticodon_Ia_Met"/>
    <property type="match status" value="1"/>
</dbReference>
<dbReference type="CDD" id="cd00814">
    <property type="entry name" value="MetRS_core"/>
    <property type="match status" value="1"/>
</dbReference>
<dbReference type="CDD" id="cd02800">
    <property type="entry name" value="tRNA_bind_EcMetRS_like"/>
    <property type="match status" value="1"/>
</dbReference>
<dbReference type="FunFam" id="1.10.730.10:FF:000005">
    <property type="entry name" value="Methionine--tRNA ligase"/>
    <property type="match status" value="1"/>
</dbReference>
<dbReference type="FunFam" id="2.20.28.20:FF:000001">
    <property type="entry name" value="Methionine--tRNA ligase"/>
    <property type="match status" value="1"/>
</dbReference>
<dbReference type="FunFam" id="2.40.50.140:FF:000042">
    <property type="entry name" value="Methionine--tRNA ligase"/>
    <property type="match status" value="1"/>
</dbReference>
<dbReference type="Gene3D" id="3.40.50.620">
    <property type="entry name" value="HUPs"/>
    <property type="match status" value="1"/>
</dbReference>
<dbReference type="Gene3D" id="1.10.730.10">
    <property type="entry name" value="Isoleucyl-tRNA Synthetase, Domain 1"/>
    <property type="match status" value="1"/>
</dbReference>
<dbReference type="Gene3D" id="2.20.28.20">
    <property type="entry name" value="Methionyl-tRNA synthetase, Zn-domain"/>
    <property type="match status" value="1"/>
</dbReference>
<dbReference type="Gene3D" id="2.40.50.140">
    <property type="entry name" value="Nucleic acid-binding proteins"/>
    <property type="match status" value="1"/>
</dbReference>
<dbReference type="HAMAP" id="MF_00098">
    <property type="entry name" value="Met_tRNA_synth_type1"/>
    <property type="match status" value="1"/>
</dbReference>
<dbReference type="InterPro" id="IPR001412">
    <property type="entry name" value="aa-tRNA-synth_I_CS"/>
</dbReference>
<dbReference type="InterPro" id="IPR041872">
    <property type="entry name" value="Anticodon_Met"/>
</dbReference>
<dbReference type="InterPro" id="IPR004495">
    <property type="entry name" value="Met-tRNA-synth_bsu_C"/>
</dbReference>
<dbReference type="InterPro" id="IPR023458">
    <property type="entry name" value="Met-tRNA_ligase_1"/>
</dbReference>
<dbReference type="InterPro" id="IPR014758">
    <property type="entry name" value="Met-tRNA_synth"/>
</dbReference>
<dbReference type="InterPro" id="IPR015413">
    <property type="entry name" value="Methionyl/Leucyl_tRNA_Synth"/>
</dbReference>
<dbReference type="InterPro" id="IPR033911">
    <property type="entry name" value="MetRS_core"/>
</dbReference>
<dbReference type="InterPro" id="IPR029038">
    <property type="entry name" value="MetRS_Zn"/>
</dbReference>
<dbReference type="InterPro" id="IPR012340">
    <property type="entry name" value="NA-bd_OB-fold"/>
</dbReference>
<dbReference type="InterPro" id="IPR014729">
    <property type="entry name" value="Rossmann-like_a/b/a_fold"/>
</dbReference>
<dbReference type="InterPro" id="IPR002547">
    <property type="entry name" value="tRNA-bd_dom"/>
</dbReference>
<dbReference type="InterPro" id="IPR009080">
    <property type="entry name" value="tRNAsynth_Ia_anticodon-bd"/>
</dbReference>
<dbReference type="NCBIfam" id="TIGR00398">
    <property type="entry name" value="metG"/>
    <property type="match status" value="1"/>
</dbReference>
<dbReference type="NCBIfam" id="TIGR00399">
    <property type="entry name" value="metG_C_term"/>
    <property type="match status" value="1"/>
</dbReference>
<dbReference type="NCBIfam" id="NF001100">
    <property type="entry name" value="PRK00133.1"/>
    <property type="match status" value="1"/>
</dbReference>
<dbReference type="PANTHER" id="PTHR45765">
    <property type="entry name" value="METHIONINE--TRNA LIGASE"/>
    <property type="match status" value="1"/>
</dbReference>
<dbReference type="PANTHER" id="PTHR45765:SF1">
    <property type="entry name" value="METHIONINE--TRNA LIGASE, CYTOPLASMIC"/>
    <property type="match status" value="1"/>
</dbReference>
<dbReference type="Pfam" id="PF19303">
    <property type="entry name" value="Anticodon_3"/>
    <property type="match status" value="1"/>
</dbReference>
<dbReference type="Pfam" id="PF09334">
    <property type="entry name" value="tRNA-synt_1g"/>
    <property type="match status" value="1"/>
</dbReference>
<dbReference type="Pfam" id="PF01588">
    <property type="entry name" value="tRNA_bind"/>
    <property type="match status" value="1"/>
</dbReference>
<dbReference type="PRINTS" id="PR01041">
    <property type="entry name" value="TRNASYNTHMET"/>
</dbReference>
<dbReference type="SUPFAM" id="SSF47323">
    <property type="entry name" value="Anticodon-binding domain of a subclass of class I aminoacyl-tRNA synthetases"/>
    <property type="match status" value="1"/>
</dbReference>
<dbReference type="SUPFAM" id="SSF57770">
    <property type="entry name" value="Methionyl-tRNA synthetase (MetRS), Zn-domain"/>
    <property type="match status" value="1"/>
</dbReference>
<dbReference type="SUPFAM" id="SSF50249">
    <property type="entry name" value="Nucleic acid-binding proteins"/>
    <property type="match status" value="1"/>
</dbReference>
<dbReference type="SUPFAM" id="SSF52374">
    <property type="entry name" value="Nucleotidylyl transferase"/>
    <property type="match status" value="1"/>
</dbReference>
<dbReference type="PROSITE" id="PS00178">
    <property type="entry name" value="AA_TRNA_LIGASE_I"/>
    <property type="match status" value="1"/>
</dbReference>
<dbReference type="PROSITE" id="PS50886">
    <property type="entry name" value="TRBD"/>
    <property type="match status" value="1"/>
</dbReference>